<proteinExistence type="inferred from homology"/>
<feature type="chain" id="PRO_1000130816" description="Serine-protein kinase RsbW">
    <location>
        <begin position="1"/>
        <end position="160"/>
    </location>
</feature>
<sequence>MMERFEKIEMKIPAKAEYVAIIRLTMAGVANRMGFAYDDIEDMKIAISEACTNIVQHAYKEDVGEITIVFGLYEDRLEIMAADNGVSFDFNSLKSKVGPYDINKPVEHLPENGLGLYLINTLMDDIQIMHDEGMTVLMTKYIQREQVENDGNPISTYKSY</sequence>
<dbReference type="EC" id="2.7.11.1" evidence="1"/>
<dbReference type="EMBL" id="CP001176">
    <property type="protein sequence ID" value="ACK62181.1"/>
    <property type="molecule type" value="Genomic_DNA"/>
</dbReference>
<dbReference type="RefSeq" id="WP_000970580.1">
    <property type="nucleotide sequence ID" value="NC_011725.1"/>
</dbReference>
<dbReference type="SMR" id="B7HFX0"/>
<dbReference type="KEGG" id="bcb:BCB4264_A1032"/>
<dbReference type="HOGENOM" id="CLU_090336_11_1_9"/>
<dbReference type="Proteomes" id="UP000007096">
    <property type="component" value="Chromosome"/>
</dbReference>
<dbReference type="GO" id="GO:0005524">
    <property type="term" value="F:ATP binding"/>
    <property type="evidence" value="ECO:0007669"/>
    <property type="project" value="UniProtKB-KW"/>
</dbReference>
<dbReference type="GO" id="GO:0106310">
    <property type="term" value="F:protein serine kinase activity"/>
    <property type="evidence" value="ECO:0007669"/>
    <property type="project" value="RHEA"/>
</dbReference>
<dbReference type="GO" id="GO:0004674">
    <property type="term" value="F:protein serine/threonine kinase activity"/>
    <property type="evidence" value="ECO:0007669"/>
    <property type="project" value="UniProtKB-KW"/>
</dbReference>
<dbReference type="GO" id="GO:0016989">
    <property type="term" value="F:sigma factor antagonist activity"/>
    <property type="evidence" value="ECO:0007669"/>
    <property type="project" value="InterPro"/>
</dbReference>
<dbReference type="CDD" id="cd16936">
    <property type="entry name" value="HATPase_RsbW-like"/>
    <property type="match status" value="1"/>
</dbReference>
<dbReference type="FunFam" id="3.30.565.10:FF:000026">
    <property type="entry name" value="Serine-protein kinase RsbW"/>
    <property type="match status" value="1"/>
</dbReference>
<dbReference type="Gene3D" id="3.30.565.10">
    <property type="entry name" value="Histidine kinase-like ATPase, C-terminal domain"/>
    <property type="match status" value="1"/>
</dbReference>
<dbReference type="HAMAP" id="MF_00638">
    <property type="entry name" value="Anti_sigma_B"/>
    <property type="match status" value="1"/>
</dbReference>
<dbReference type="InterPro" id="IPR050267">
    <property type="entry name" value="Anti-sigma-factor_SerPK"/>
</dbReference>
<dbReference type="InterPro" id="IPR036890">
    <property type="entry name" value="HATPase_C_sf"/>
</dbReference>
<dbReference type="InterPro" id="IPR010193">
    <property type="entry name" value="RsbW"/>
</dbReference>
<dbReference type="NCBIfam" id="NF003144">
    <property type="entry name" value="PRK04069.1"/>
    <property type="match status" value="1"/>
</dbReference>
<dbReference type="NCBIfam" id="TIGR01924">
    <property type="entry name" value="rsbW_low_gc"/>
    <property type="match status" value="1"/>
</dbReference>
<dbReference type="PANTHER" id="PTHR35526">
    <property type="entry name" value="ANTI-SIGMA-F FACTOR RSBW-RELATED"/>
    <property type="match status" value="1"/>
</dbReference>
<dbReference type="PANTHER" id="PTHR35526:SF9">
    <property type="entry name" value="SERINE-PROTEIN KINASE RSBW"/>
    <property type="match status" value="1"/>
</dbReference>
<dbReference type="Pfam" id="PF13581">
    <property type="entry name" value="HATPase_c_2"/>
    <property type="match status" value="1"/>
</dbReference>
<dbReference type="SUPFAM" id="SSF55874">
    <property type="entry name" value="ATPase domain of HSP90 chaperone/DNA topoisomerase II/histidine kinase"/>
    <property type="match status" value="1"/>
</dbReference>
<protein>
    <recommendedName>
        <fullName evidence="1">Serine-protein kinase RsbW</fullName>
        <ecNumber evidence="1">2.7.11.1</ecNumber>
    </recommendedName>
    <alternativeName>
        <fullName evidence="1">Anti-sigma-B factor</fullName>
    </alternativeName>
    <alternativeName>
        <fullName evidence="1">Sigma-B negative effector RsbW</fullName>
    </alternativeName>
</protein>
<comment type="function">
    <text evidence="1">Negative regulator of sigma-B activity. Phosphorylates and inactivates its specific antagonist protein, RsbV. Upon phosphorylation of RsbV, RsbW is released and binds to sigma-B, thereby blocking its ability to form an RNA polymerase holoenzyme (E-sigma-B).</text>
</comment>
<comment type="catalytic activity">
    <reaction evidence="1">
        <text>L-seryl-[protein] + ATP = O-phospho-L-seryl-[protein] + ADP + H(+)</text>
        <dbReference type="Rhea" id="RHEA:17989"/>
        <dbReference type="Rhea" id="RHEA-COMP:9863"/>
        <dbReference type="Rhea" id="RHEA-COMP:11604"/>
        <dbReference type="ChEBI" id="CHEBI:15378"/>
        <dbReference type="ChEBI" id="CHEBI:29999"/>
        <dbReference type="ChEBI" id="CHEBI:30616"/>
        <dbReference type="ChEBI" id="CHEBI:83421"/>
        <dbReference type="ChEBI" id="CHEBI:456216"/>
        <dbReference type="EC" id="2.7.11.1"/>
    </reaction>
</comment>
<comment type="catalytic activity">
    <reaction evidence="1">
        <text>L-threonyl-[protein] + ATP = O-phospho-L-threonyl-[protein] + ADP + H(+)</text>
        <dbReference type="Rhea" id="RHEA:46608"/>
        <dbReference type="Rhea" id="RHEA-COMP:11060"/>
        <dbReference type="Rhea" id="RHEA-COMP:11605"/>
        <dbReference type="ChEBI" id="CHEBI:15378"/>
        <dbReference type="ChEBI" id="CHEBI:30013"/>
        <dbReference type="ChEBI" id="CHEBI:30616"/>
        <dbReference type="ChEBI" id="CHEBI:61977"/>
        <dbReference type="ChEBI" id="CHEBI:456216"/>
        <dbReference type="EC" id="2.7.11.1"/>
    </reaction>
</comment>
<comment type="similarity">
    <text evidence="1">Belongs to the anti-sigma-factor family.</text>
</comment>
<reference key="1">
    <citation type="submission" date="2008-10" db="EMBL/GenBank/DDBJ databases">
        <title>Genome sequence of Bacillus cereus B4264.</title>
        <authorList>
            <person name="Dodson R.J."/>
            <person name="Durkin A.S."/>
            <person name="Rosovitz M.J."/>
            <person name="Rasko D.A."/>
            <person name="Hoffmaster A."/>
            <person name="Ravel J."/>
            <person name="Sutton G."/>
        </authorList>
    </citation>
    <scope>NUCLEOTIDE SEQUENCE [LARGE SCALE GENOMIC DNA]</scope>
    <source>
        <strain>B4264</strain>
    </source>
</reference>
<evidence type="ECO:0000255" key="1">
    <source>
        <dbReference type="HAMAP-Rule" id="MF_00638"/>
    </source>
</evidence>
<organism>
    <name type="scientific">Bacillus cereus (strain B4264)</name>
    <dbReference type="NCBI Taxonomy" id="405532"/>
    <lineage>
        <taxon>Bacteria</taxon>
        <taxon>Bacillati</taxon>
        <taxon>Bacillota</taxon>
        <taxon>Bacilli</taxon>
        <taxon>Bacillales</taxon>
        <taxon>Bacillaceae</taxon>
        <taxon>Bacillus</taxon>
        <taxon>Bacillus cereus group</taxon>
    </lineage>
</organism>
<accession>B7HFX0</accession>
<gene>
    <name evidence="1" type="primary">rsbW</name>
    <name type="ordered locus">BCB4264_A1032</name>
</gene>
<name>RSBW_BACC4</name>
<keyword id="KW-0067">ATP-binding</keyword>
<keyword id="KW-0418">Kinase</keyword>
<keyword id="KW-0547">Nucleotide-binding</keyword>
<keyword id="KW-0723">Serine/threonine-protein kinase</keyword>
<keyword id="KW-0808">Transferase</keyword>